<comment type="cofactor">
    <cofactor evidence="1">
        <name>Zn(2+)</name>
        <dbReference type="ChEBI" id="CHEBI:29105"/>
    </cofactor>
    <text evidence="1">Binds 1 zinc ion.</text>
</comment>
<comment type="subcellular location">
    <subcellularLocation>
        <location evidence="1">Cytoplasm</location>
    </subcellularLocation>
</comment>
<comment type="similarity">
    <text evidence="1">Belongs to the SprT family.</text>
</comment>
<name>SPRT_PSEPG</name>
<organism>
    <name type="scientific">Pseudomonas putida (strain GB-1)</name>
    <dbReference type="NCBI Taxonomy" id="76869"/>
    <lineage>
        <taxon>Bacteria</taxon>
        <taxon>Pseudomonadati</taxon>
        <taxon>Pseudomonadota</taxon>
        <taxon>Gammaproteobacteria</taxon>
        <taxon>Pseudomonadales</taxon>
        <taxon>Pseudomonadaceae</taxon>
        <taxon>Pseudomonas</taxon>
    </lineage>
</organism>
<sequence>MPELLKERVETCYQQAETFFKRPFPRPEVSFKLRGQKAGVAHLHENLLRFNLQLYRENQEDFLRQTVAHEVAHLVAHQLFGDSIQAHGEEWQLIMRGVYELPPNRCHNYEVQRRATTRYIYRCPCPQGDFPFTAQRHKLVRQGRRYLCKRCRAILVYSGETRVE</sequence>
<evidence type="ECO:0000255" key="1">
    <source>
        <dbReference type="HAMAP-Rule" id="MF_00746"/>
    </source>
</evidence>
<dbReference type="EMBL" id="CP000926">
    <property type="protein sequence ID" value="ABY97148.1"/>
    <property type="molecule type" value="Genomic_DNA"/>
</dbReference>
<dbReference type="RefSeq" id="WP_012270924.1">
    <property type="nucleotide sequence ID" value="NC_010322.1"/>
</dbReference>
<dbReference type="KEGG" id="ppg:PputGB1_1241"/>
<dbReference type="eggNOG" id="COG3091">
    <property type="taxonomic scope" value="Bacteria"/>
</dbReference>
<dbReference type="HOGENOM" id="CLU_113336_0_1_6"/>
<dbReference type="Proteomes" id="UP000002157">
    <property type="component" value="Chromosome"/>
</dbReference>
<dbReference type="GO" id="GO:0005737">
    <property type="term" value="C:cytoplasm"/>
    <property type="evidence" value="ECO:0007669"/>
    <property type="project" value="UniProtKB-SubCell"/>
</dbReference>
<dbReference type="GO" id="GO:0008270">
    <property type="term" value="F:zinc ion binding"/>
    <property type="evidence" value="ECO:0007669"/>
    <property type="project" value="UniProtKB-UniRule"/>
</dbReference>
<dbReference type="GO" id="GO:0006950">
    <property type="term" value="P:response to stress"/>
    <property type="evidence" value="ECO:0007669"/>
    <property type="project" value="UniProtKB-ARBA"/>
</dbReference>
<dbReference type="HAMAP" id="MF_00746">
    <property type="entry name" value="SprT"/>
    <property type="match status" value="1"/>
</dbReference>
<dbReference type="InterPro" id="IPR006640">
    <property type="entry name" value="SprT-like_domain"/>
</dbReference>
<dbReference type="InterPro" id="IPR023483">
    <property type="entry name" value="Uncharacterised_SprT"/>
</dbReference>
<dbReference type="NCBIfam" id="NF003421">
    <property type="entry name" value="PRK04860.1"/>
    <property type="match status" value="1"/>
</dbReference>
<dbReference type="PANTHER" id="PTHR38773">
    <property type="entry name" value="PROTEIN SPRT"/>
    <property type="match status" value="1"/>
</dbReference>
<dbReference type="PANTHER" id="PTHR38773:SF1">
    <property type="entry name" value="PROTEIN SPRT"/>
    <property type="match status" value="1"/>
</dbReference>
<dbReference type="Pfam" id="PF10263">
    <property type="entry name" value="SprT-like"/>
    <property type="match status" value="1"/>
</dbReference>
<dbReference type="SMART" id="SM00731">
    <property type="entry name" value="SprT"/>
    <property type="match status" value="1"/>
</dbReference>
<dbReference type="PROSITE" id="PS00142">
    <property type="entry name" value="ZINC_PROTEASE"/>
    <property type="match status" value="1"/>
</dbReference>
<keyword id="KW-0963">Cytoplasm</keyword>
<keyword id="KW-0479">Metal-binding</keyword>
<keyword id="KW-0862">Zinc</keyword>
<reference key="1">
    <citation type="submission" date="2008-01" db="EMBL/GenBank/DDBJ databases">
        <title>Complete sequence of Pseudomonas putida GB-1.</title>
        <authorList>
            <consortium name="US DOE Joint Genome Institute"/>
            <person name="Copeland A."/>
            <person name="Lucas S."/>
            <person name="Lapidus A."/>
            <person name="Barry K."/>
            <person name="Glavina del Rio T."/>
            <person name="Dalin E."/>
            <person name="Tice H."/>
            <person name="Pitluck S."/>
            <person name="Bruce D."/>
            <person name="Goodwin L."/>
            <person name="Chertkov O."/>
            <person name="Brettin T."/>
            <person name="Detter J.C."/>
            <person name="Han C."/>
            <person name="Kuske C.R."/>
            <person name="Schmutz J."/>
            <person name="Larimer F."/>
            <person name="Land M."/>
            <person name="Hauser L."/>
            <person name="Kyrpides N."/>
            <person name="Kim E."/>
            <person name="McCarthy J.K."/>
            <person name="Richardson P."/>
        </authorList>
    </citation>
    <scope>NUCLEOTIDE SEQUENCE [LARGE SCALE GENOMIC DNA]</scope>
    <source>
        <strain>GB-1</strain>
    </source>
</reference>
<accession>B0KT30</accession>
<feature type="chain" id="PRO_1000083481" description="Protein SprT">
    <location>
        <begin position="1"/>
        <end position="164"/>
    </location>
</feature>
<feature type="domain" description="SprT-like" evidence="1">
    <location>
        <begin position="14"/>
        <end position="156"/>
    </location>
</feature>
<feature type="active site" evidence="1">
    <location>
        <position position="70"/>
    </location>
</feature>
<feature type="binding site" evidence="1">
    <location>
        <position position="69"/>
    </location>
    <ligand>
        <name>Zn(2+)</name>
        <dbReference type="ChEBI" id="CHEBI:29105"/>
    </ligand>
</feature>
<feature type="binding site" evidence="1">
    <location>
        <position position="73"/>
    </location>
    <ligand>
        <name>Zn(2+)</name>
        <dbReference type="ChEBI" id="CHEBI:29105"/>
    </ligand>
</feature>
<gene>
    <name evidence="1" type="primary">sprT</name>
    <name type="ordered locus">PputGB1_1241</name>
</gene>
<proteinExistence type="inferred from homology"/>
<protein>
    <recommendedName>
        <fullName evidence="1">Protein SprT</fullName>
    </recommendedName>
</protein>